<sequence length="443" mass="49961">MDAWSRSLERLEAEFPPEDVHTWLKPLQADLRVDSLVLYAPNAFIVDQVRELYLARIRELLAHFAGFSDVFLEIGSRPRPVEAQNAPVSTPSAHVSSEPQVPFAGNLDNHYTFANFVEGRSNQLGLAAAFQAAQKPGDRAHNPLLLYGGTGLGKTHLMFAAGNAMRQANPGAKVLYLRSEQFFSAMIRALQEKTMDQFKRQFQQVDALLIDDIQFFAGKDRTQEEFFHTFNALFDGKQQIILTCDRYPREVEGLEARLKSRLAWGLSVAIEPPDFETRAAIVLAKARERGAEIPDDVAFLIAKKMRSNVRDLEGALNTLTARANFTGRAITTEFAQETLRDLLRAQQQAISIPNIQKTVADYYGLQIKDLLSKRRTRSLARPRQVAMALTKELTEHSLPEIGDAFAGRDHTTVLHACRQIRTLMETDGKLREDWDKLIRKLSE</sequence>
<organism>
    <name type="scientific">Stenotrophomonas maltophilia (strain K279a)</name>
    <dbReference type="NCBI Taxonomy" id="522373"/>
    <lineage>
        <taxon>Bacteria</taxon>
        <taxon>Pseudomonadati</taxon>
        <taxon>Pseudomonadota</taxon>
        <taxon>Gammaproteobacteria</taxon>
        <taxon>Lysobacterales</taxon>
        <taxon>Lysobacteraceae</taxon>
        <taxon>Stenotrophomonas</taxon>
        <taxon>Stenotrophomonas maltophilia group</taxon>
    </lineage>
</organism>
<comment type="function">
    <text evidence="1">Plays an essential role in the initiation and regulation of chromosomal replication. ATP-DnaA binds to the origin of replication (oriC) to initiate formation of the DNA replication initiation complex once per cell cycle. Binds the DnaA box (a 9 base pair repeat at the origin) and separates the double-stranded (ds)DNA. Forms a right-handed helical filament on oriC DNA; dsDNA binds to the exterior of the filament while single-stranded (ss)DNA is stabiized in the filament's interior. The ATP-DnaA-oriC complex binds and stabilizes one strand of the AT-rich DNA unwinding element (DUE), permitting loading of DNA polymerase. After initiation quickly degrades to an ADP-DnaA complex that is not apt for DNA replication. Binds acidic phospholipids.</text>
</comment>
<comment type="subunit">
    <text evidence="1">Oligomerizes as a right-handed, spiral filament on DNA at oriC.</text>
</comment>
<comment type="subcellular location">
    <subcellularLocation>
        <location evidence="1">Cytoplasm</location>
    </subcellularLocation>
</comment>
<comment type="domain">
    <text evidence="1">Domain I is involved in oligomerization and binding regulators, domain II is flexibile and of varying length in different bacteria, domain III forms the AAA+ region, while domain IV binds dsDNA.</text>
</comment>
<comment type="similarity">
    <text evidence="1">Belongs to the DnaA family.</text>
</comment>
<name>DNAA_STRMK</name>
<protein>
    <recommendedName>
        <fullName evidence="1">Chromosomal replication initiator protein DnaA</fullName>
    </recommendedName>
</protein>
<reference key="1">
    <citation type="journal article" date="2008" name="Genome Biol.">
        <title>The complete genome, comparative and functional analysis of Stenotrophomonas maltophilia reveals an organism heavily shielded by drug resistance determinants.</title>
        <authorList>
            <person name="Crossman L.C."/>
            <person name="Gould V.C."/>
            <person name="Dow J.M."/>
            <person name="Vernikos G.S."/>
            <person name="Okazaki A."/>
            <person name="Sebaihia M."/>
            <person name="Saunders D."/>
            <person name="Arrowsmith C."/>
            <person name="Carver T."/>
            <person name="Peters N."/>
            <person name="Adlem E."/>
            <person name="Kerhornou A."/>
            <person name="Lord A."/>
            <person name="Murphy L."/>
            <person name="Seeger K."/>
            <person name="Squares R."/>
            <person name="Rutter S."/>
            <person name="Quail M.A."/>
            <person name="Rajandream M.A."/>
            <person name="Harris D."/>
            <person name="Churcher C."/>
            <person name="Bentley S.D."/>
            <person name="Parkhill J."/>
            <person name="Thomson N.R."/>
            <person name="Avison M.B."/>
        </authorList>
    </citation>
    <scope>NUCLEOTIDE SEQUENCE [LARGE SCALE GENOMIC DNA]</scope>
    <source>
        <strain>K279a</strain>
    </source>
</reference>
<accession>B2FUW1</accession>
<keyword id="KW-0067">ATP-binding</keyword>
<keyword id="KW-0963">Cytoplasm</keyword>
<keyword id="KW-0235">DNA replication</keyword>
<keyword id="KW-0238">DNA-binding</keyword>
<keyword id="KW-0446">Lipid-binding</keyword>
<keyword id="KW-0547">Nucleotide-binding</keyword>
<keyword id="KW-1185">Reference proteome</keyword>
<evidence type="ECO:0000255" key="1">
    <source>
        <dbReference type="HAMAP-Rule" id="MF_00377"/>
    </source>
</evidence>
<proteinExistence type="inferred from homology"/>
<feature type="chain" id="PRO_1000122022" description="Chromosomal replication initiator protein DnaA">
    <location>
        <begin position="1"/>
        <end position="443"/>
    </location>
</feature>
<feature type="region of interest" description="Domain I, interacts with DnaA modulators" evidence="1">
    <location>
        <begin position="1"/>
        <end position="67"/>
    </location>
</feature>
<feature type="region of interest" description="Domain II" evidence="1">
    <location>
        <begin position="67"/>
        <end position="105"/>
    </location>
</feature>
<feature type="region of interest" description="Domain III, AAA+ region" evidence="1">
    <location>
        <begin position="106"/>
        <end position="323"/>
    </location>
</feature>
<feature type="region of interest" description="Domain IV, binds dsDNA" evidence="1">
    <location>
        <begin position="324"/>
        <end position="443"/>
    </location>
</feature>
<feature type="binding site" evidence="1">
    <location>
        <position position="151"/>
    </location>
    <ligand>
        <name>ATP</name>
        <dbReference type="ChEBI" id="CHEBI:30616"/>
    </ligand>
</feature>
<feature type="binding site" evidence="1">
    <location>
        <position position="153"/>
    </location>
    <ligand>
        <name>ATP</name>
        <dbReference type="ChEBI" id="CHEBI:30616"/>
    </ligand>
</feature>
<feature type="binding site" evidence="1">
    <location>
        <position position="154"/>
    </location>
    <ligand>
        <name>ATP</name>
        <dbReference type="ChEBI" id="CHEBI:30616"/>
    </ligand>
</feature>
<feature type="binding site" evidence="1">
    <location>
        <position position="155"/>
    </location>
    <ligand>
        <name>ATP</name>
        <dbReference type="ChEBI" id="CHEBI:30616"/>
    </ligand>
</feature>
<dbReference type="EMBL" id="AM743169">
    <property type="protein sequence ID" value="CAN85568.1"/>
    <property type="molecule type" value="Genomic_DNA"/>
</dbReference>
<dbReference type="RefSeq" id="WP_005411730.1">
    <property type="nucleotide sequence ID" value="NC_010943.1"/>
</dbReference>
<dbReference type="SMR" id="B2FUW1"/>
<dbReference type="EnsemblBacteria" id="CAN85568">
    <property type="protein sequence ID" value="CAN85568"/>
    <property type="gene ID" value="Smlt0001"/>
</dbReference>
<dbReference type="GeneID" id="93831104"/>
<dbReference type="KEGG" id="sml:Smlt0001"/>
<dbReference type="eggNOG" id="COG0593">
    <property type="taxonomic scope" value="Bacteria"/>
</dbReference>
<dbReference type="HOGENOM" id="CLU_026910_0_1_6"/>
<dbReference type="Proteomes" id="UP000008840">
    <property type="component" value="Chromosome"/>
</dbReference>
<dbReference type="GO" id="GO:0005737">
    <property type="term" value="C:cytoplasm"/>
    <property type="evidence" value="ECO:0007669"/>
    <property type="project" value="UniProtKB-SubCell"/>
</dbReference>
<dbReference type="GO" id="GO:0005886">
    <property type="term" value="C:plasma membrane"/>
    <property type="evidence" value="ECO:0007669"/>
    <property type="project" value="TreeGrafter"/>
</dbReference>
<dbReference type="GO" id="GO:0005524">
    <property type="term" value="F:ATP binding"/>
    <property type="evidence" value="ECO:0007669"/>
    <property type="project" value="UniProtKB-UniRule"/>
</dbReference>
<dbReference type="GO" id="GO:0016887">
    <property type="term" value="F:ATP hydrolysis activity"/>
    <property type="evidence" value="ECO:0007669"/>
    <property type="project" value="InterPro"/>
</dbReference>
<dbReference type="GO" id="GO:0003688">
    <property type="term" value="F:DNA replication origin binding"/>
    <property type="evidence" value="ECO:0007669"/>
    <property type="project" value="UniProtKB-UniRule"/>
</dbReference>
<dbReference type="GO" id="GO:0008289">
    <property type="term" value="F:lipid binding"/>
    <property type="evidence" value="ECO:0007669"/>
    <property type="project" value="UniProtKB-KW"/>
</dbReference>
<dbReference type="GO" id="GO:0006270">
    <property type="term" value="P:DNA replication initiation"/>
    <property type="evidence" value="ECO:0007669"/>
    <property type="project" value="UniProtKB-UniRule"/>
</dbReference>
<dbReference type="GO" id="GO:0006275">
    <property type="term" value="P:regulation of DNA replication"/>
    <property type="evidence" value="ECO:0007669"/>
    <property type="project" value="UniProtKB-UniRule"/>
</dbReference>
<dbReference type="CDD" id="cd06571">
    <property type="entry name" value="Bac_DnaA_C"/>
    <property type="match status" value="1"/>
</dbReference>
<dbReference type="FunFam" id="1.10.1750.10:FF:000001">
    <property type="entry name" value="Chromosomal replication initiator protein DnaA"/>
    <property type="match status" value="1"/>
</dbReference>
<dbReference type="FunFam" id="1.10.8.60:FF:000003">
    <property type="entry name" value="Chromosomal replication initiator protein DnaA"/>
    <property type="match status" value="1"/>
</dbReference>
<dbReference type="FunFam" id="3.40.50.300:FF:000103">
    <property type="entry name" value="Chromosomal replication initiator protein DnaA"/>
    <property type="match status" value="1"/>
</dbReference>
<dbReference type="Gene3D" id="1.10.1750.10">
    <property type="match status" value="1"/>
</dbReference>
<dbReference type="Gene3D" id="1.10.8.60">
    <property type="match status" value="1"/>
</dbReference>
<dbReference type="Gene3D" id="3.30.300.180">
    <property type="match status" value="1"/>
</dbReference>
<dbReference type="Gene3D" id="3.40.50.300">
    <property type="entry name" value="P-loop containing nucleotide triphosphate hydrolases"/>
    <property type="match status" value="1"/>
</dbReference>
<dbReference type="HAMAP" id="MF_00377">
    <property type="entry name" value="DnaA_bact"/>
    <property type="match status" value="1"/>
</dbReference>
<dbReference type="InterPro" id="IPR003593">
    <property type="entry name" value="AAA+_ATPase"/>
</dbReference>
<dbReference type="InterPro" id="IPR001957">
    <property type="entry name" value="Chromosome_initiator_DnaA"/>
</dbReference>
<dbReference type="InterPro" id="IPR020591">
    <property type="entry name" value="Chromosome_initiator_DnaA-like"/>
</dbReference>
<dbReference type="InterPro" id="IPR018312">
    <property type="entry name" value="Chromosome_initiator_DnaA_CS"/>
</dbReference>
<dbReference type="InterPro" id="IPR013159">
    <property type="entry name" value="DnaA_C"/>
</dbReference>
<dbReference type="InterPro" id="IPR013317">
    <property type="entry name" value="DnaA_dom"/>
</dbReference>
<dbReference type="InterPro" id="IPR024633">
    <property type="entry name" value="DnaA_N_dom"/>
</dbReference>
<dbReference type="InterPro" id="IPR038454">
    <property type="entry name" value="DnaA_N_sf"/>
</dbReference>
<dbReference type="InterPro" id="IPR027417">
    <property type="entry name" value="P-loop_NTPase"/>
</dbReference>
<dbReference type="InterPro" id="IPR010921">
    <property type="entry name" value="Trp_repressor/repl_initiator"/>
</dbReference>
<dbReference type="NCBIfam" id="TIGR00362">
    <property type="entry name" value="DnaA"/>
    <property type="match status" value="1"/>
</dbReference>
<dbReference type="PANTHER" id="PTHR30050">
    <property type="entry name" value="CHROMOSOMAL REPLICATION INITIATOR PROTEIN DNAA"/>
    <property type="match status" value="1"/>
</dbReference>
<dbReference type="PANTHER" id="PTHR30050:SF2">
    <property type="entry name" value="CHROMOSOMAL REPLICATION INITIATOR PROTEIN DNAA"/>
    <property type="match status" value="1"/>
</dbReference>
<dbReference type="Pfam" id="PF00308">
    <property type="entry name" value="Bac_DnaA"/>
    <property type="match status" value="1"/>
</dbReference>
<dbReference type="Pfam" id="PF08299">
    <property type="entry name" value="Bac_DnaA_C"/>
    <property type="match status" value="1"/>
</dbReference>
<dbReference type="Pfam" id="PF11638">
    <property type="entry name" value="DnaA_N"/>
    <property type="match status" value="1"/>
</dbReference>
<dbReference type="PRINTS" id="PR00051">
    <property type="entry name" value="DNAA"/>
</dbReference>
<dbReference type="SMART" id="SM00382">
    <property type="entry name" value="AAA"/>
    <property type="match status" value="1"/>
</dbReference>
<dbReference type="SMART" id="SM00760">
    <property type="entry name" value="Bac_DnaA_C"/>
    <property type="match status" value="1"/>
</dbReference>
<dbReference type="SUPFAM" id="SSF52540">
    <property type="entry name" value="P-loop containing nucleoside triphosphate hydrolases"/>
    <property type="match status" value="1"/>
</dbReference>
<dbReference type="SUPFAM" id="SSF48295">
    <property type="entry name" value="TrpR-like"/>
    <property type="match status" value="1"/>
</dbReference>
<dbReference type="PROSITE" id="PS01008">
    <property type="entry name" value="DNAA"/>
    <property type="match status" value="1"/>
</dbReference>
<gene>
    <name evidence="1" type="primary">dnaA</name>
    <name type="ordered locus">Smlt0001</name>
</gene>